<dbReference type="EMBL" id="CP000964">
    <property type="protein sequence ID" value="ACI11750.1"/>
    <property type="molecule type" value="Genomic_DNA"/>
</dbReference>
<dbReference type="SMR" id="B5Y1L4"/>
<dbReference type="KEGG" id="kpe:KPK_4563"/>
<dbReference type="HOGENOM" id="CLU_015263_7_0_6"/>
<dbReference type="Proteomes" id="UP000001734">
    <property type="component" value="Chromosome"/>
</dbReference>
<dbReference type="GO" id="GO:0005886">
    <property type="term" value="C:plasma membrane"/>
    <property type="evidence" value="ECO:0007669"/>
    <property type="project" value="UniProtKB-SubCell"/>
</dbReference>
<dbReference type="GO" id="GO:0015297">
    <property type="term" value="F:antiporter activity"/>
    <property type="evidence" value="ECO:0007669"/>
    <property type="project" value="UniProtKB-UniRule"/>
</dbReference>
<dbReference type="GO" id="GO:0005247">
    <property type="term" value="F:voltage-gated chloride channel activity"/>
    <property type="evidence" value="ECO:0007669"/>
    <property type="project" value="TreeGrafter"/>
</dbReference>
<dbReference type="CDD" id="cd01031">
    <property type="entry name" value="EriC"/>
    <property type="match status" value="1"/>
</dbReference>
<dbReference type="FunFam" id="1.10.3080.10:FF:000005">
    <property type="entry name" value="H(+)/Cl(-) exchange transporter ClcA"/>
    <property type="match status" value="1"/>
</dbReference>
<dbReference type="Gene3D" id="1.10.3080.10">
    <property type="entry name" value="Clc chloride channel"/>
    <property type="match status" value="1"/>
</dbReference>
<dbReference type="HAMAP" id="MF_01128">
    <property type="entry name" value="CLC_ClcA"/>
    <property type="match status" value="1"/>
</dbReference>
<dbReference type="InterPro" id="IPR023861">
    <property type="entry name" value="Cl-channel_ClcA"/>
</dbReference>
<dbReference type="InterPro" id="IPR014743">
    <property type="entry name" value="Cl-channel_core"/>
</dbReference>
<dbReference type="InterPro" id="IPR001807">
    <property type="entry name" value="ClC"/>
</dbReference>
<dbReference type="NCBIfam" id="NF003640">
    <property type="entry name" value="PRK05277.1"/>
    <property type="match status" value="1"/>
</dbReference>
<dbReference type="PANTHER" id="PTHR45711">
    <property type="entry name" value="CHLORIDE CHANNEL PROTEIN"/>
    <property type="match status" value="1"/>
</dbReference>
<dbReference type="PANTHER" id="PTHR45711:SF6">
    <property type="entry name" value="CHLORIDE CHANNEL PROTEIN"/>
    <property type="match status" value="1"/>
</dbReference>
<dbReference type="Pfam" id="PF00654">
    <property type="entry name" value="Voltage_CLC"/>
    <property type="match status" value="1"/>
</dbReference>
<dbReference type="PRINTS" id="PR00762">
    <property type="entry name" value="CLCHANNEL"/>
</dbReference>
<dbReference type="SUPFAM" id="SSF81340">
    <property type="entry name" value="Clc chloride channel"/>
    <property type="match status" value="1"/>
</dbReference>
<accession>B5Y1L4</accession>
<protein>
    <recommendedName>
        <fullName evidence="1">H(+)/Cl(-) exchange transporter ClcA</fullName>
    </recommendedName>
</protein>
<name>CLCA_KLEP3</name>
<sequence>MKAETPSFEAHQFVRVRRGDAVRRLIQRDKTPLAVLLMAAVVGTLAGLVGVAFEKSVNWVQNQRIGALAQVADHWYLVWPLAFILSALLAMVGYFLVRRFAPEAGGSGIPEIEGALEELRPVRWWRVLPVKFIGGMGTLGAGMVLGREGPMVQLGGNIGRMVLDIFRMRSPEARHTLLATGAASGLSAAFNAPLAGILFIIEEMRPQFRYNLISIKAVFTGVIMSSIVFRIFNGEAAIIEVGKLSNAPVNTLWLYLVLGMLFGCFGPLFNFLVLRTQDIFQRIHGGNIKTWVLMGGVIGGICGLLGLMQPSAVGGGFNLIPIAAAGNFSVGLLLFIFIARVVTTLICFSSGAPGGIFAPMLALGTLLGTAFGMAAIPLFPAYHLDAGTFAIAGMGALLAASVRAPLTGIVLVLEMTDNYQLILPMIITCLGATLLAQFLGGKPLYSTILQRTLAKQEAEQAAKAQQAPRENT</sequence>
<keyword id="KW-0050">Antiport</keyword>
<keyword id="KW-0997">Cell inner membrane</keyword>
<keyword id="KW-1003">Cell membrane</keyword>
<keyword id="KW-0868">Chloride</keyword>
<keyword id="KW-0406">Ion transport</keyword>
<keyword id="KW-0472">Membrane</keyword>
<keyword id="KW-0812">Transmembrane</keyword>
<keyword id="KW-1133">Transmembrane helix</keyword>
<keyword id="KW-0813">Transport</keyword>
<evidence type="ECO:0000255" key="1">
    <source>
        <dbReference type="HAMAP-Rule" id="MF_01128"/>
    </source>
</evidence>
<organism>
    <name type="scientific">Klebsiella pneumoniae (strain 342)</name>
    <dbReference type="NCBI Taxonomy" id="507522"/>
    <lineage>
        <taxon>Bacteria</taxon>
        <taxon>Pseudomonadati</taxon>
        <taxon>Pseudomonadota</taxon>
        <taxon>Gammaproteobacteria</taxon>
        <taxon>Enterobacterales</taxon>
        <taxon>Enterobacteriaceae</taxon>
        <taxon>Klebsiella/Raoultella group</taxon>
        <taxon>Klebsiella</taxon>
        <taxon>Klebsiella pneumoniae complex</taxon>
    </lineage>
</organism>
<gene>
    <name evidence="1" type="primary">clcA</name>
    <name evidence="1" type="synonym">eriC</name>
    <name type="ordered locus">KPK_4563</name>
</gene>
<reference key="1">
    <citation type="journal article" date="2008" name="PLoS Genet.">
        <title>Complete genome sequence of the N2-fixing broad host range endophyte Klebsiella pneumoniae 342 and virulence predictions verified in mice.</title>
        <authorList>
            <person name="Fouts D.E."/>
            <person name="Tyler H.L."/>
            <person name="DeBoy R.T."/>
            <person name="Daugherty S."/>
            <person name="Ren Q."/>
            <person name="Badger J.H."/>
            <person name="Durkin A.S."/>
            <person name="Huot H."/>
            <person name="Shrivastava S."/>
            <person name="Kothari S."/>
            <person name="Dodson R.J."/>
            <person name="Mohamoud Y."/>
            <person name="Khouri H."/>
            <person name="Roesch L.F.W."/>
            <person name="Krogfelt K.A."/>
            <person name="Struve C."/>
            <person name="Triplett E.W."/>
            <person name="Methe B.A."/>
        </authorList>
    </citation>
    <scope>NUCLEOTIDE SEQUENCE [LARGE SCALE GENOMIC DNA]</scope>
    <source>
        <strain>342</strain>
    </source>
</reference>
<proteinExistence type="inferred from homology"/>
<comment type="function">
    <text evidence="1">Proton-coupled chloride transporter. Functions as antiport system and exchanges two chloride ions for 1 proton. Probably acts as an electrical shunt for an outwardly-directed proton pump that is linked to amino acid decarboxylation, as part of the extreme acid resistance (XAR) response.</text>
</comment>
<comment type="catalytic activity">
    <reaction evidence="1">
        <text>2 chloride(in) + H(+)(out) = 2 chloride(out) + H(+)(in)</text>
        <dbReference type="Rhea" id="RHEA:29567"/>
        <dbReference type="ChEBI" id="CHEBI:15378"/>
        <dbReference type="ChEBI" id="CHEBI:17996"/>
    </reaction>
</comment>
<comment type="subunit">
    <text evidence="1">Homodimer.</text>
</comment>
<comment type="subcellular location">
    <subcellularLocation>
        <location evidence="1">Cell inner membrane</location>
        <topology evidence="1">Multi-pass membrane protein</topology>
    </subcellularLocation>
</comment>
<comment type="similarity">
    <text evidence="1">Belongs to the chloride channel (TC 2.A.49) family. ClcA subfamily.</text>
</comment>
<feature type="chain" id="PRO_1000137302" description="H(+)/Cl(-) exchange transporter ClcA">
    <location>
        <begin position="1"/>
        <end position="472"/>
    </location>
</feature>
<feature type="topological domain" description="Cytoplasmic" evidence="1">
    <location>
        <begin position="1"/>
        <end position="32"/>
    </location>
</feature>
<feature type="transmembrane region" description="Helical" evidence="1">
    <location>
        <begin position="33"/>
        <end position="69"/>
    </location>
</feature>
<feature type="topological domain" description="Periplasmic" evidence="1">
    <location>
        <begin position="70"/>
        <end position="76"/>
    </location>
</feature>
<feature type="transmembrane region" description="Helical" evidence="1">
    <location>
        <begin position="77"/>
        <end position="100"/>
    </location>
</feature>
<feature type="intramembrane region" description="Helical" evidence="1">
    <location>
        <begin position="109"/>
        <end position="116"/>
    </location>
</feature>
<feature type="topological domain" description="Cytoplasmic" evidence="1">
    <location>
        <begin position="117"/>
        <end position="123"/>
    </location>
</feature>
<feature type="transmembrane region" description="Helical" evidence="1">
    <location>
        <begin position="124"/>
        <end position="141"/>
    </location>
</feature>
<feature type="transmembrane region" description="Helical" evidence="1">
    <location>
        <begin position="148"/>
        <end position="166"/>
    </location>
</feature>
<feature type="topological domain" description="Cytoplasmic" evidence="1">
    <location>
        <begin position="167"/>
        <end position="176"/>
    </location>
</feature>
<feature type="intramembrane region" description="Helical" evidence="1">
    <location>
        <begin position="177"/>
        <end position="189"/>
    </location>
</feature>
<feature type="intramembrane region" description="Helical" evidence="1">
    <location>
        <begin position="193"/>
        <end position="201"/>
    </location>
</feature>
<feature type="topological domain" description="Cytoplasmic" evidence="1">
    <location>
        <begin position="202"/>
        <end position="214"/>
    </location>
</feature>
<feature type="transmembrane region" description="Helical" evidence="1">
    <location>
        <begin position="215"/>
        <end position="232"/>
    </location>
</feature>
<feature type="topological domain" description="Periplasmic" evidence="1">
    <location>
        <begin position="233"/>
        <end position="252"/>
    </location>
</feature>
<feature type="transmembrane region" description="Helical" evidence="1">
    <location>
        <begin position="253"/>
        <end position="281"/>
    </location>
</feature>
<feature type="topological domain" description="Cytoplasmic" evidence="1">
    <location>
        <begin position="282"/>
        <end position="287"/>
    </location>
</feature>
<feature type="transmembrane region" description="Helical" evidence="1">
    <location>
        <begin position="288"/>
        <end position="309"/>
    </location>
</feature>
<feature type="topological domain" description="Periplasmic" evidence="1">
    <location>
        <begin position="310"/>
        <end position="329"/>
    </location>
</feature>
<feature type="transmembrane region" description="Helical" evidence="1">
    <location>
        <begin position="330"/>
        <end position="349"/>
    </location>
</feature>
<feature type="transmembrane region" description="Helical" evidence="1">
    <location>
        <begin position="355"/>
        <end position="376"/>
    </location>
</feature>
<feature type="topological domain" description="Periplasmic" evidence="1">
    <location>
        <begin position="377"/>
        <end position="386"/>
    </location>
</feature>
<feature type="intramembrane region" description="Helical" evidence="1">
    <location>
        <begin position="387"/>
        <end position="401"/>
    </location>
</feature>
<feature type="intramembrane region" description="Note=Loop between two helices" evidence="1">
    <location>
        <begin position="402"/>
        <end position="404"/>
    </location>
</feature>
<feature type="intramembrane region" description="Helical" evidence="1">
    <location>
        <begin position="405"/>
        <end position="416"/>
    </location>
</feature>
<feature type="intramembrane region" description="Note=Loop between two helices" evidence="1">
    <location>
        <begin position="417"/>
        <end position="421"/>
    </location>
</feature>
<feature type="transmembrane region" description="Helical" evidence="1">
    <location>
        <begin position="422"/>
        <end position="438"/>
    </location>
</feature>
<feature type="topological domain" description="Cytoplasmic" evidence="1">
    <location>
        <begin position="439"/>
        <end position="472"/>
    </location>
</feature>
<feature type="short sequence motif" description="Selectivity filter part_1" evidence="1">
    <location>
        <begin position="106"/>
        <end position="110"/>
    </location>
</feature>
<feature type="short sequence motif" description="Selectivity filter part_2" evidence="1">
    <location>
        <begin position="146"/>
        <end position="150"/>
    </location>
</feature>
<feature type="short sequence motif" description="Selectivity filter part_3" evidence="1">
    <location>
        <begin position="355"/>
        <end position="359"/>
    </location>
</feature>
<feature type="binding site" evidence="1">
    <location>
        <position position="107"/>
    </location>
    <ligand>
        <name>chloride</name>
        <dbReference type="ChEBI" id="CHEBI:17996"/>
    </ligand>
</feature>
<feature type="binding site" evidence="1">
    <location>
        <position position="356"/>
    </location>
    <ligand>
        <name>chloride</name>
        <dbReference type="ChEBI" id="CHEBI:17996"/>
    </ligand>
</feature>
<feature type="binding site" evidence="1">
    <location>
        <position position="357"/>
    </location>
    <ligand>
        <name>chloride</name>
        <dbReference type="ChEBI" id="CHEBI:17996"/>
    </ligand>
</feature>
<feature type="binding site" evidence="1">
    <location>
        <position position="445"/>
    </location>
    <ligand>
        <name>chloride</name>
        <dbReference type="ChEBI" id="CHEBI:17996"/>
    </ligand>
</feature>
<feature type="site" description="Mediates proton transfer from the outer aqueous phase to the interior of the protein; involved in linking H(+) and Cl(-) transport" evidence="1">
    <location>
        <position position="148"/>
    </location>
</feature>
<feature type="site" description="Mediates proton transfer from the protein to the inner aqueous phase" evidence="1">
    <location>
        <position position="203"/>
    </location>
</feature>